<organism>
    <name type="scientific">Methanospirillum hungatei JF-1 (strain ATCC 27890 / DSM 864 / NBRC 100397 / JF-1)</name>
    <dbReference type="NCBI Taxonomy" id="323259"/>
    <lineage>
        <taxon>Archaea</taxon>
        <taxon>Methanobacteriati</taxon>
        <taxon>Methanobacteriota</taxon>
        <taxon>Stenosarchaea group</taxon>
        <taxon>Methanomicrobia</taxon>
        <taxon>Methanomicrobiales</taxon>
        <taxon>Methanospirillaceae</taxon>
        <taxon>Methanospirillum</taxon>
    </lineage>
</organism>
<gene>
    <name evidence="1" type="primary">aroB'</name>
    <name type="ordered locus">Mhun_1034</name>
</gene>
<evidence type="ECO:0000255" key="1">
    <source>
        <dbReference type="HAMAP-Rule" id="MF_01244"/>
    </source>
</evidence>
<keyword id="KW-0028">Amino-acid biosynthesis</keyword>
<keyword id="KW-0057">Aromatic amino acid biosynthesis</keyword>
<keyword id="KW-0520">NAD</keyword>
<keyword id="KW-0560">Oxidoreductase</keyword>
<keyword id="KW-1185">Reference proteome</keyword>
<comment type="function">
    <text evidence="1">Catalyzes the oxidative deamination and cyclization of 2-amino-3,7-dideoxy-D-threo-hept-6-ulosonic acid (ADH) to yield 3-dehydroquinate (DHQ), which is fed into the canonical shikimic pathway of aromatic amino acid biosynthesis.</text>
</comment>
<comment type="catalytic activity">
    <reaction evidence="1">
        <text>2-amino-2,3,7-trideoxy-D-lyxo-hept-6-ulosonate + NAD(+) + H2O = 3-dehydroquinate + NH4(+) + NADH + H(+)</text>
        <dbReference type="Rhea" id="RHEA:25956"/>
        <dbReference type="ChEBI" id="CHEBI:15377"/>
        <dbReference type="ChEBI" id="CHEBI:15378"/>
        <dbReference type="ChEBI" id="CHEBI:28938"/>
        <dbReference type="ChEBI" id="CHEBI:32364"/>
        <dbReference type="ChEBI" id="CHEBI:57540"/>
        <dbReference type="ChEBI" id="CHEBI:57945"/>
        <dbReference type="ChEBI" id="CHEBI:58859"/>
        <dbReference type="EC" id="1.4.1.24"/>
    </reaction>
</comment>
<comment type="similarity">
    <text evidence="1">Belongs to the archaeal-type DHQ synthase family.</text>
</comment>
<feature type="chain" id="PRO_0000372055" description="3-dehydroquinate synthase">
    <location>
        <begin position="1"/>
        <end position="328"/>
    </location>
</feature>
<sequence>MKQVFVDLRPWDKELAIAALESGAAGVIADSAGPVRELGRILVIAPDGDLIPGQDIHEITIGNTEDQARAMEAARTCRIIVHTPDWTIIPLENLVACGDNVIAVVSDIKEAEQALTVLEKGVSGVLVKTDDPDLVRSICRMVQSGISGQQLHRLTVTTVKPAGMGERVCVDTCSLMVDGEGMLVGNTSSGFFLVHAETLVNPYVAPRPFRVNAGGVHAYLQVPEGKTAYLADLKAGDRVMIVHGNGSCREATVGRVKIERRPLFLVEAESECQKVSIILQNAETIRLVRPDNSAVSVTSLKPGDVVLGRVESGGRHFGMAIDETIIEK</sequence>
<proteinExistence type="inferred from homology"/>
<name>DHQS_METHJ</name>
<accession>Q2FQ51</accession>
<protein>
    <recommendedName>
        <fullName evidence="1">3-dehydroquinate synthase</fullName>
        <shortName evidence="1">DHQ synthase</shortName>
        <ecNumber evidence="1">1.4.1.24</ecNumber>
    </recommendedName>
    <alternativeName>
        <fullName evidence="1">3-dehydroquinate synthase II</fullName>
    </alternativeName>
</protein>
<reference key="1">
    <citation type="journal article" date="2016" name="Stand. Genomic Sci.">
        <title>Complete genome sequence of Methanospirillum hungatei type strain JF1.</title>
        <authorList>
            <person name="Gunsalus R.P."/>
            <person name="Cook L.E."/>
            <person name="Crable B."/>
            <person name="Rohlin L."/>
            <person name="McDonald E."/>
            <person name="Mouttaki H."/>
            <person name="Sieber J.R."/>
            <person name="Poweleit N."/>
            <person name="Zhou H."/>
            <person name="Lapidus A.L."/>
            <person name="Daligault H.E."/>
            <person name="Land M."/>
            <person name="Gilna P."/>
            <person name="Ivanova N."/>
            <person name="Kyrpides N."/>
            <person name="Culley D.E."/>
            <person name="McInerney M.J."/>
        </authorList>
    </citation>
    <scope>NUCLEOTIDE SEQUENCE [LARGE SCALE GENOMIC DNA]</scope>
    <source>
        <strain>ATCC 27890 / DSM 864 / NBRC 100397 / JF-1</strain>
    </source>
</reference>
<dbReference type="EC" id="1.4.1.24" evidence="1"/>
<dbReference type="EMBL" id="CP000254">
    <property type="protein sequence ID" value="ABD40784.1"/>
    <property type="molecule type" value="Genomic_DNA"/>
</dbReference>
<dbReference type="RefSeq" id="WP_011448063.1">
    <property type="nucleotide sequence ID" value="NC_007796.1"/>
</dbReference>
<dbReference type="FunCoup" id="Q2FQ51">
    <property type="interactions" value="7"/>
</dbReference>
<dbReference type="STRING" id="323259.Mhun_1034"/>
<dbReference type="EnsemblBacteria" id="ABD40784">
    <property type="protein sequence ID" value="ABD40784"/>
    <property type="gene ID" value="Mhun_1034"/>
</dbReference>
<dbReference type="GeneID" id="3924642"/>
<dbReference type="KEGG" id="mhu:Mhun_1034"/>
<dbReference type="eggNOG" id="arCOG04353">
    <property type="taxonomic scope" value="Archaea"/>
</dbReference>
<dbReference type="HOGENOM" id="CLU_056379_0_0_2"/>
<dbReference type="InParanoid" id="Q2FQ51"/>
<dbReference type="OrthoDB" id="10265at2157"/>
<dbReference type="Proteomes" id="UP000001941">
    <property type="component" value="Chromosome"/>
</dbReference>
<dbReference type="GO" id="GO:0003856">
    <property type="term" value="F:3-dehydroquinate synthase activity"/>
    <property type="evidence" value="ECO:0007669"/>
    <property type="project" value="InterPro"/>
</dbReference>
<dbReference type="GO" id="GO:0102042">
    <property type="term" value="F:dehydroquinate synthase activity"/>
    <property type="evidence" value="ECO:0007669"/>
    <property type="project" value="UniProtKB-EC"/>
</dbReference>
<dbReference type="GO" id="GO:0051287">
    <property type="term" value="F:NAD binding"/>
    <property type="evidence" value="ECO:0007669"/>
    <property type="project" value="UniProtKB-UniRule"/>
</dbReference>
<dbReference type="GO" id="GO:0008652">
    <property type="term" value="P:amino acid biosynthetic process"/>
    <property type="evidence" value="ECO:0007669"/>
    <property type="project" value="UniProtKB-KW"/>
</dbReference>
<dbReference type="GO" id="GO:0009073">
    <property type="term" value="P:aromatic amino acid family biosynthetic process"/>
    <property type="evidence" value="ECO:0007669"/>
    <property type="project" value="UniProtKB-UniRule"/>
</dbReference>
<dbReference type="HAMAP" id="MF_01244">
    <property type="entry name" value="Arch_DHQ_synthase"/>
    <property type="match status" value="1"/>
</dbReference>
<dbReference type="InterPro" id="IPR002812">
    <property type="entry name" value="DHQ_synth"/>
</dbReference>
<dbReference type="NCBIfam" id="NF002627">
    <property type="entry name" value="PRK02290.1-5"/>
    <property type="match status" value="1"/>
</dbReference>
<dbReference type="PANTHER" id="PTHR33563">
    <property type="match status" value="1"/>
</dbReference>
<dbReference type="PANTHER" id="PTHR33563:SF1">
    <property type="entry name" value="3-DEHYDROQUINATE SYNTHASE"/>
    <property type="match status" value="1"/>
</dbReference>
<dbReference type="Pfam" id="PF01959">
    <property type="entry name" value="DHQS"/>
    <property type="match status" value="1"/>
</dbReference>
<dbReference type="PIRSF" id="PIRSF006655">
    <property type="entry name" value="DHQ_synth"/>
    <property type="match status" value="1"/>
</dbReference>